<gene>
    <name evidence="1" type="primary">rpsM</name>
    <name type="ordered locus">AHA_0330</name>
</gene>
<name>RS13_AERHH</name>
<proteinExistence type="inferred from homology"/>
<accession>A0KF42</accession>
<dbReference type="EMBL" id="CP000462">
    <property type="protein sequence ID" value="ABK38153.1"/>
    <property type="molecule type" value="Genomic_DNA"/>
</dbReference>
<dbReference type="RefSeq" id="WP_005307991.1">
    <property type="nucleotide sequence ID" value="NC_008570.1"/>
</dbReference>
<dbReference type="RefSeq" id="YP_854864.1">
    <property type="nucleotide sequence ID" value="NC_008570.1"/>
</dbReference>
<dbReference type="SMR" id="A0KF42"/>
<dbReference type="STRING" id="380703.AHA_0330"/>
<dbReference type="EnsemblBacteria" id="ABK38153">
    <property type="protein sequence ID" value="ABK38153"/>
    <property type="gene ID" value="AHA_0330"/>
</dbReference>
<dbReference type="GeneID" id="97858414"/>
<dbReference type="KEGG" id="aha:AHA_0330"/>
<dbReference type="PATRIC" id="fig|380703.7.peg.320"/>
<dbReference type="eggNOG" id="COG0099">
    <property type="taxonomic scope" value="Bacteria"/>
</dbReference>
<dbReference type="HOGENOM" id="CLU_103849_1_2_6"/>
<dbReference type="OrthoDB" id="9803610at2"/>
<dbReference type="PRO" id="PR:A0KF42"/>
<dbReference type="Proteomes" id="UP000000756">
    <property type="component" value="Chromosome"/>
</dbReference>
<dbReference type="GO" id="GO:0005829">
    <property type="term" value="C:cytosol"/>
    <property type="evidence" value="ECO:0007669"/>
    <property type="project" value="TreeGrafter"/>
</dbReference>
<dbReference type="GO" id="GO:0015935">
    <property type="term" value="C:small ribosomal subunit"/>
    <property type="evidence" value="ECO:0007669"/>
    <property type="project" value="TreeGrafter"/>
</dbReference>
<dbReference type="GO" id="GO:0019843">
    <property type="term" value="F:rRNA binding"/>
    <property type="evidence" value="ECO:0007669"/>
    <property type="project" value="UniProtKB-UniRule"/>
</dbReference>
<dbReference type="GO" id="GO:0003735">
    <property type="term" value="F:structural constituent of ribosome"/>
    <property type="evidence" value="ECO:0007669"/>
    <property type="project" value="InterPro"/>
</dbReference>
<dbReference type="GO" id="GO:0000049">
    <property type="term" value="F:tRNA binding"/>
    <property type="evidence" value="ECO:0007669"/>
    <property type="project" value="UniProtKB-UniRule"/>
</dbReference>
<dbReference type="GO" id="GO:0006412">
    <property type="term" value="P:translation"/>
    <property type="evidence" value="ECO:0007669"/>
    <property type="project" value="UniProtKB-UniRule"/>
</dbReference>
<dbReference type="FunFam" id="1.10.8.50:FF:000001">
    <property type="entry name" value="30S ribosomal protein S13"/>
    <property type="match status" value="1"/>
</dbReference>
<dbReference type="FunFam" id="4.10.910.10:FF:000001">
    <property type="entry name" value="30S ribosomal protein S13"/>
    <property type="match status" value="1"/>
</dbReference>
<dbReference type="Gene3D" id="1.10.8.50">
    <property type="match status" value="1"/>
</dbReference>
<dbReference type="Gene3D" id="4.10.910.10">
    <property type="entry name" value="30s ribosomal protein s13, domain 2"/>
    <property type="match status" value="1"/>
</dbReference>
<dbReference type="HAMAP" id="MF_01315">
    <property type="entry name" value="Ribosomal_uS13"/>
    <property type="match status" value="1"/>
</dbReference>
<dbReference type="InterPro" id="IPR027437">
    <property type="entry name" value="Rbsml_uS13_C"/>
</dbReference>
<dbReference type="InterPro" id="IPR001892">
    <property type="entry name" value="Ribosomal_uS13"/>
</dbReference>
<dbReference type="InterPro" id="IPR010979">
    <property type="entry name" value="Ribosomal_uS13-like_H2TH"/>
</dbReference>
<dbReference type="InterPro" id="IPR019980">
    <property type="entry name" value="Ribosomal_uS13_bac-type"/>
</dbReference>
<dbReference type="InterPro" id="IPR018269">
    <property type="entry name" value="Ribosomal_uS13_CS"/>
</dbReference>
<dbReference type="NCBIfam" id="TIGR03631">
    <property type="entry name" value="uS13_bact"/>
    <property type="match status" value="1"/>
</dbReference>
<dbReference type="PANTHER" id="PTHR10871">
    <property type="entry name" value="30S RIBOSOMAL PROTEIN S13/40S RIBOSOMAL PROTEIN S18"/>
    <property type="match status" value="1"/>
</dbReference>
<dbReference type="PANTHER" id="PTHR10871:SF1">
    <property type="entry name" value="SMALL RIBOSOMAL SUBUNIT PROTEIN US13M"/>
    <property type="match status" value="1"/>
</dbReference>
<dbReference type="Pfam" id="PF00416">
    <property type="entry name" value="Ribosomal_S13"/>
    <property type="match status" value="1"/>
</dbReference>
<dbReference type="PIRSF" id="PIRSF002134">
    <property type="entry name" value="Ribosomal_S13"/>
    <property type="match status" value="1"/>
</dbReference>
<dbReference type="SUPFAM" id="SSF46946">
    <property type="entry name" value="S13-like H2TH domain"/>
    <property type="match status" value="1"/>
</dbReference>
<dbReference type="PROSITE" id="PS00646">
    <property type="entry name" value="RIBOSOMAL_S13_1"/>
    <property type="match status" value="1"/>
</dbReference>
<dbReference type="PROSITE" id="PS50159">
    <property type="entry name" value="RIBOSOMAL_S13_2"/>
    <property type="match status" value="1"/>
</dbReference>
<evidence type="ECO:0000255" key="1">
    <source>
        <dbReference type="HAMAP-Rule" id="MF_01315"/>
    </source>
</evidence>
<evidence type="ECO:0000256" key="2">
    <source>
        <dbReference type="SAM" id="MobiDB-lite"/>
    </source>
</evidence>
<evidence type="ECO:0000305" key="3"/>
<keyword id="KW-1185">Reference proteome</keyword>
<keyword id="KW-0687">Ribonucleoprotein</keyword>
<keyword id="KW-0689">Ribosomal protein</keyword>
<keyword id="KW-0694">RNA-binding</keyword>
<keyword id="KW-0699">rRNA-binding</keyword>
<keyword id="KW-0820">tRNA-binding</keyword>
<sequence length="118" mass="13201">MARIAGINIPDHKHAVIALTAIYGVGRTRSKAICAAAGIAENVKIKDLDEAQIESLREQVGKFTVEGDLRRQISMNIKRLMDLGCYRGLRHRRSLPVRGQRTKTNARTRKGPRKAIKK</sequence>
<comment type="function">
    <text evidence="1">Located at the top of the head of the 30S subunit, it contacts several helices of the 16S rRNA. In the 70S ribosome it contacts the 23S rRNA (bridge B1a) and protein L5 of the 50S subunit (bridge B1b), connecting the 2 subunits; these bridges are implicated in subunit movement. Contacts the tRNAs in the A and P-sites.</text>
</comment>
<comment type="subunit">
    <text evidence="1">Part of the 30S ribosomal subunit. Forms a loose heterodimer with protein S19. Forms two bridges to the 50S subunit in the 70S ribosome.</text>
</comment>
<comment type="similarity">
    <text evidence="1">Belongs to the universal ribosomal protein uS13 family.</text>
</comment>
<feature type="chain" id="PRO_0000306554" description="Small ribosomal subunit protein uS13">
    <location>
        <begin position="1"/>
        <end position="118"/>
    </location>
</feature>
<feature type="region of interest" description="Disordered" evidence="2">
    <location>
        <begin position="94"/>
        <end position="118"/>
    </location>
</feature>
<protein>
    <recommendedName>
        <fullName evidence="1">Small ribosomal subunit protein uS13</fullName>
    </recommendedName>
    <alternativeName>
        <fullName evidence="3">30S ribosomal protein S13</fullName>
    </alternativeName>
</protein>
<organism>
    <name type="scientific">Aeromonas hydrophila subsp. hydrophila (strain ATCC 7966 / DSM 30187 / BCRC 13018 / CCUG 14551 / JCM 1027 / KCTC 2358 / NCIMB 9240 / NCTC 8049)</name>
    <dbReference type="NCBI Taxonomy" id="380703"/>
    <lineage>
        <taxon>Bacteria</taxon>
        <taxon>Pseudomonadati</taxon>
        <taxon>Pseudomonadota</taxon>
        <taxon>Gammaproteobacteria</taxon>
        <taxon>Aeromonadales</taxon>
        <taxon>Aeromonadaceae</taxon>
        <taxon>Aeromonas</taxon>
    </lineage>
</organism>
<reference key="1">
    <citation type="journal article" date="2006" name="J. Bacteriol.">
        <title>Genome sequence of Aeromonas hydrophila ATCC 7966T: jack of all trades.</title>
        <authorList>
            <person name="Seshadri R."/>
            <person name="Joseph S.W."/>
            <person name="Chopra A.K."/>
            <person name="Sha J."/>
            <person name="Shaw J."/>
            <person name="Graf J."/>
            <person name="Haft D.H."/>
            <person name="Wu M."/>
            <person name="Ren Q."/>
            <person name="Rosovitz M.J."/>
            <person name="Madupu R."/>
            <person name="Tallon L."/>
            <person name="Kim M."/>
            <person name="Jin S."/>
            <person name="Vuong H."/>
            <person name="Stine O.C."/>
            <person name="Ali A."/>
            <person name="Horneman A.J."/>
            <person name="Heidelberg J.F."/>
        </authorList>
    </citation>
    <scope>NUCLEOTIDE SEQUENCE [LARGE SCALE GENOMIC DNA]</scope>
    <source>
        <strain>ATCC 7966 / DSM 30187 / BCRC 13018 / CCUG 14551 / JCM 1027 / KCTC 2358 / NCIMB 9240 / NCTC 8049</strain>
    </source>
</reference>